<dbReference type="EMBL" id="X70063">
    <property type="protein sequence ID" value="CAA49668.1"/>
    <property type="molecule type" value="Genomic_DNA"/>
</dbReference>
<dbReference type="PIR" id="S33820">
    <property type="entry name" value="S33820"/>
</dbReference>
<dbReference type="GO" id="GO:0005576">
    <property type="term" value="C:extracellular region"/>
    <property type="evidence" value="ECO:0007669"/>
    <property type="project" value="UniProtKB-SubCell"/>
</dbReference>
<protein>
    <recommendedName>
        <fullName>Salivary gland SP38-40.B protein</fullName>
    </recommendedName>
</protein>
<accession>Q05019</accession>
<name>S40B_CHITE</name>
<keyword id="KW-0677">Repeat</keyword>
<keyword id="KW-0964">Secreted</keyword>
<keyword id="KW-0732">Signal</keyword>
<comment type="function">
    <text>Used by the larvae to construct a supramolecular structure, the larval tube.</text>
</comment>
<comment type="subcellular location">
    <subcellularLocation>
        <location>Secreted</location>
    </subcellularLocation>
</comment>
<comment type="tissue specificity">
    <text>Salivary gland.</text>
</comment>
<comment type="developmental stage">
    <text>Expression of the SP38-40.a and B genes are different: the A gene is expressed throughout the larval fourth instar but considerably less in the prepupal stage, while the B gene shows the opposite expression pattern.</text>
</comment>
<gene>
    <name type="primary">SP38-40.B</name>
</gene>
<proteinExistence type="evidence at transcript level"/>
<organism>
    <name type="scientific">Chironomus tentans</name>
    <name type="common">Midge</name>
    <name type="synonym">Camptochironomus tentans</name>
    <dbReference type="NCBI Taxonomy" id="7153"/>
    <lineage>
        <taxon>Eukaryota</taxon>
        <taxon>Metazoa</taxon>
        <taxon>Ecdysozoa</taxon>
        <taxon>Arthropoda</taxon>
        <taxon>Hexapoda</taxon>
        <taxon>Insecta</taxon>
        <taxon>Pterygota</taxon>
        <taxon>Neoptera</taxon>
        <taxon>Endopterygota</taxon>
        <taxon>Diptera</taxon>
        <taxon>Nematocera</taxon>
        <taxon>Chironomoidea</taxon>
        <taxon>Chironomidae</taxon>
        <taxon>Chironominae</taxon>
        <taxon>Chironomus</taxon>
    </lineage>
</organism>
<sequence>MRIKFLVVLAVICLLAHYASASGMGGDKKPKDAPKPKDAPKPKEVKPVKADSSEYEIEVIKHQKEKTEKKEKEKKAHVEIKKKIKNKEKKFVPCSEILKDEKLECEKNATPGYKALFEFKESESFCEWECDYEAIPGAKKDEKKEKKVVKVIKPPKEKPPKKPRKECSGEKVIKFQNCLVKIRGLIAFGDKTKNFDKKFAKLVQGKQKKGAKKAKGGKKAEPKPGPKPAPKPGPKPAPKPVPKPADKPKDAKK</sequence>
<reference key="1">
    <citation type="journal article" date="1993" name="J. Mol. Biol.">
        <title>Two secretory protein genes in Chironomus tentans have arisen by gene duplication and exhibit different developmental expression patterns.</title>
        <authorList>
            <person name="Galli J."/>
            <person name="Wieslander L."/>
        </authorList>
    </citation>
    <scope>NUCLEOTIDE SEQUENCE [GENOMIC DNA]</scope>
</reference>
<feature type="signal peptide" evidence="1">
    <location>
        <begin position="1"/>
        <end position="21"/>
    </location>
</feature>
<feature type="chain" id="PRO_0000022264" description="Salivary gland SP38-40.B protein">
    <location>
        <begin position="22"/>
        <end position="253"/>
    </location>
</feature>
<feature type="repeat" description="1-1">
    <location>
        <begin position="29"/>
        <end position="34"/>
    </location>
</feature>
<feature type="repeat" description="1-2">
    <location>
        <begin position="35"/>
        <end position="40"/>
    </location>
</feature>
<feature type="repeat" description="1-3; approximate">
    <location>
        <begin position="41"/>
        <end position="47"/>
    </location>
</feature>
<feature type="repeat" description="2-1">
    <location>
        <begin position="153"/>
        <end position="156"/>
    </location>
</feature>
<feature type="repeat" description="2-2">
    <location>
        <begin position="158"/>
        <end position="161"/>
    </location>
</feature>
<feature type="repeat" description="2-3; approximate">
    <location>
        <begin position="162"/>
        <end position="166"/>
    </location>
</feature>
<feature type="repeat" description="3-1">
    <location>
        <begin position="222"/>
        <end position="225"/>
    </location>
</feature>
<feature type="repeat" description="3-2">
    <location>
        <begin position="226"/>
        <end position="229"/>
    </location>
</feature>
<feature type="repeat" description="3-3">
    <location>
        <begin position="230"/>
        <end position="233"/>
    </location>
</feature>
<feature type="repeat" description="3-4">
    <location>
        <begin position="234"/>
        <end position="237"/>
    </location>
</feature>
<feature type="repeat" description="3-5">
    <location>
        <begin position="238"/>
        <end position="241"/>
    </location>
</feature>
<feature type="repeat" description="3-6">
    <location>
        <begin position="242"/>
        <end position="245"/>
    </location>
</feature>
<feature type="repeat" description="3-7; approximate">
    <location>
        <begin position="246"/>
        <end position="249"/>
    </location>
</feature>
<feature type="region of interest" description="Disordered" evidence="2">
    <location>
        <begin position="23"/>
        <end position="51"/>
    </location>
</feature>
<feature type="region of interest" description="3 X 6 AA approximate tandem repeats of K-P-K-D-A-P">
    <location>
        <begin position="29"/>
        <end position="47"/>
    </location>
</feature>
<feature type="region of interest" description="Disordered" evidence="2">
    <location>
        <begin position="140"/>
        <end position="168"/>
    </location>
</feature>
<feature type="region of interest" description="3 X 4 AA approximate tandem repeats of K-P-P-K">
    <location>
        <begin position="153"/>
        <end position="166"/>
    </location>
</feature>
<feature type="region of interest" description="Disordered" evidence="2">
    <location>
        <begin position="203"/>
        <end position="253"/>
    </location>
</feature>
<feature type="region of interest" description="7 X 4 AA approximate tandem repeats of P-K-P-[GAV]">
    <location>
        <begin position="222"/>
        <end position="249"/>
    </location>
</feature>
<feature type="compositionally biased region" description="Basic and acidic residues" evidence="2">
    <location>
        <begin position="26"/>
        <end position="51"/>
    </location>
</feature>
<feature type="compositionally biased region" description="Basic and acidic residues" evidence="2">
    <location>
        <begin position="154"/>
        <end position="168"/>
    </location>
</feature>
<feature type="compositionally biased region" description="Basic residues" evidence="2">
    <location>
        <begin position="206"/>
        <end position="217"/>
    </location>
</feature>
<feature type="compositionally biased region" description="Pro residues" evidence="2">
    <location>
        <begin position="225"/>
        <end position="243"/>
    </location>
</feature>
<feature type="compositionally biased region" description="Basic and acidic residues" evidence="2">
    <location>
        <begin position="244"/>
        <end position="253"/>
    </location>
</feature>
<evidence type="ECO:0000255" key="1"/>
<evidence type="ECO:0000256" key="2">
    <source>
        <dbReference type="SAM" id="MobiDB-lite"/>
    </source>
</evidence>